<gene>
    <name evidence="1" type="primary">NA</name>
</gene>
<accession>P31349</accession>
<evidence type="ECO:0000255" key="1">
    <source>
        <dbReference type="HAMAP-Rule" id="MF_04071"/>
    </source>
</evidence>
<protein>
    <recommendedName>
        <fullName evidence="1">Neuraminidase</fullName>
        <ecNumber evidence="1">3.2.1.18</ecNumber>
    </recommendedName>
</protein>
<keyword id="KW-0106">Calcium</keyword>
<keyword id="KW-1015">Disulfide bond</keyword>
<keyword id="KW-0325">Glycoprotein</keyword>
<keyword id="KW-0326">Glycosidase</keyword>
<keyword id="KW-1032">Host cell membrane</keyword>
<keyword id="KW-1043">Host membrane</keyword>
<keyword id="KW-0378">Hydrolase</keyword>
<keyword id="KW-0472">Membrane</keyword>
<keyword id="KW-0479">Metal-binding</keyword>
<keyword id="KW-0735">Signal-anchor</keyword>
<keyword id="KW-0812">Transmembrane</keyword>
<keyword id="KW-1133">Transmembrane helix</keyword>
<keyword id="KW-0946">Virion</keyword>
<reference key="1">
    <citation type="journal article" date="1985" name="Bioorg. Khim.">
        <title>Synthesis, cloning and determination of the primary structure of a full-size DNA copy of the neuraminidase gene from influenza virus type A subtype H1N1.</title>
        <authorList>
            <person name="Beklemishev A.B."/>
            <person name="Blinov V.M."/>
            <person name="Vassilenko S.K."/>
            <person name="Golovin S.Y."/>
            <person name="Karginov V.A."/>
            <person name="Mamayev L.V."/>
            <person name="Mikriukov N.N."/>
            <person name="Netesov S.V."/>
            <person name="Petrenko V.A."/>
            <person name="Petrov N.A."/>
            <person name="Frolov I.V."/>
        </authorList>
    </citation>
    <scope>NUCLEOTIDE SEQUENCE [GENOMIC RNA]</scope>
</reference>
<reference key="2">
    <citation type="journal article" date="2004" name="Virus Res.">
        <title>Assembly and budding of influenza virus.</title>
        <authorList>
            <person name="Nayak D.P."/>
            <person name="Hui E.K."/>
            <person name="Barman S."/>
        </authorList>
    </citation>
    <scope>REVIEW</scope>
</reference>
<reference key="3">
    <citation type="journal article" date="2005" name="N. Engl. J. Med.">
        <title>Neuraminidase inhibitors for influenza.</title>
        <authorList>
            <person name="Moscona A."/>
        </authorList>
    </citation>
    <scope>REVIEW</scope>
</reference>
<reference key="4">
    <citation type="journal article" date="2005" name="Biol. Pharm. Bull.">
        <title>Sialobiology of influenza: molecular mechanism of host range variation of influenza viruses.</title>
        <authorList>
            <person name="Suzuki Y."/>
        </authorList>
    </citation>
    <scope>REVIEW</scope>
</reference>
<feature type="chain" id="PRO_0000078705" description="Neuraminidase">
    <location>
        <begin position="1"/>
        <end position="470"/>
    </location>
</feature>
<feature type="topological domain" description="Intravirion" evidence="1">
    <location>
        <begin position="1"/>
        <end position="6"/>
    </location>
</feature>
<feature type="transmembrane region" description="Helical" evidence="1">
    <location>
        <begin position="7"/>
        <end position="27"/>
    </location>
</feature>
<feature type="topological domain" description="Virion surface" evidence="1">
    <location>
        <begin position="28"/>
        <end position="470"/>
    </location>
</feature>
<feature type="region of interest" description="Involved in apical transport and lipid raft association" evidence="1">
    <location>
        <begin position="11"/>
        <end position="33"/>
    </location>
</feature>
<feature type="region of interest" description="Hypervariable stalk region" evidence="1">
    <location>
        <begin position="36"/>
        <end position="90"/>
    </location>
</feature>
<feature type="region of interest" description="Head of neuraminidase" evidence="1">
    <location>
        <begin position="91"/>
        <end position="470"/>
    </location>
</feature>
<feature type="active site" description="Proton donor/acceptor" evidence="1">
    <location>
        <position position="151"/>
    </location>
</feature>
<feature type="active site" description="Nucleophile" evidence="1">
    <location>
        <position position="402"/>
    </location>
</feature>
<feature type="binding site" evidence="1">
    <location>
        <position position="118"/>
    </location>
    <ligand>
        <name>substrate</name>
    </ligand>
</feature>
<feature type="binding site" evidence="1">
    <location>
        <position position="152"/>
    </location>
    <ligand>
        <name>substrate</name>
    </ligand>
</feature>
<feature type="binding site" evidence="1">
    <location>
        <begin position="277"/>
        <end position="278"/>
    </location>
    <ligand>
        <name>substrate</name>
    </ligand>
</feature>
<feature type="binding site" evidence="1">
    <location>
        <position position="293"/>
    </location>
    <ligand>
        <name>substrate</name>
    </ligand>
</feature>
<feature type="binding site" evidence="1">
    <location>
        <position position="294"/>
    </location>
    <ligand>
        <name>Ca(2+)</name>
        <dbReference type="ChEBI" id="CHEBI:29108"/>
    </ligand>
</feature>
<feature type="binding site" evidence="1">
    <location>
        <position position="298"/>
    </location>
    <ligand>
        <name>Ca(2+)</name>
        <dbReference type="ChEBI" id="CHEBI:29108"/>
    </ligand>
</feature>
<feature type="binding site" evidence="1">
    <location>
        <position position="324"/>
    </location>
    <ligand>
        <name>Ca(2+)</name>
        <dbReference type="ChEBI" id="CHEBI:29108"/>
    </ligand>
</feature>
<feature type="binding site" evidence="1">
    <location>
        <position position="368"/>
    </location>
    <ligand>
        <name>substrate</name>
    </ligand>
</feature>
<feature type="glycosylation site" description="N-linked (GlcNAc...) asparagine; by host" evidence="1">
    <location>
        <position position="44"/>
    </location>
</feature>
<feature type="glycosylation site" description="N-linked (GlcNAc...) asparagine; by host" evidence="1">
    <location>
        <position position="58"/>
    </location>
</feature>
<feature type="glycosylation site" description="N-linked (GlcNAc...) asparagine; by host" evidence="1">
    <location>
        <position position="63"/>
    </location>
</feature>
<feature type="glycosylation site" description="N-linked (GlcNAc...) asparagine; by host" evidence="1">
    <location>
        <position position="68"/>
    </location>
</feature>
<feature type="glycosylation site" description="N-linked (GlcNAc...) asparagine; by host" evidence="1">
    <location>
        <position position="88"/>
    </location>
</feature>
<feature type="glycosylation site" description="N-linked (GlcNAc...) asparagine; by host" evidence="1">
    <location>
        <position position="146"/>
    </location>
</feature>
<feature type="glycosylation site" description="N-linked (GlcNAc...) asparagine; by host" evidence="1">
    <location>
        <position position="235"/>
    </location>
</feature>
<feature type="glycosylation site" description="N-linked (GlcNAc...) asparagine; by host" evidence="1">
    <location>
        <position position="365"/>
    </location>
</feature>
<feature type="glycosylation site" description="N-linked (GlcNAc...) asparagine; by host" evidence="1">
    <location>
        <position position="455"/>
    </location>
</feature>
<feature type="disulfide bond" evidence="1">
    <location>
        <begin position="92"/>
        <end position="417"/>
    </location>
</feature>
<feature type="disulfide bond" evidence="1">
    <location>
        <begin position="124"/>
        <end position="129"/>
    </location>
</feature>
<feature type="disulfide bond" evidence="1">
    <location>
        <begin position="184"/>
        <end position="231"/>
    </location>
</feature>
<feature type="disulfide bond" evidence="1">
    <location>
        <begin position="233"/>
        <end position="238"/>
    </location>
</feature>
<feature type="disulfide bond" evidence="1">
    <location>
        <begin position="279"/>
        <end position="292"/>
    </location>
</feature>
<feature type="disulfide bond" evidence="1">
    <location>
        <begin position="281"/>
        <end position="290"/>
    </location>
</feature>
<feature type="disulfide bond" evidence="1">
    <location>
        <begin position="318"/>
        <end position="335"/>
    </location>
</feature>
<feature type="disulfide bond" evidence="1">
    <location>
        <begin position="421"/>
        <end position="447"/>
    </location>
</feature>
<proteinExistence type="inferred from homology"/>
<comment type="function">
    <text evidence="1">Catalyzes the removal of terminal sialic acid residues from viral and cellular glycoconjugates. Cleaves off the terminal sialic acids on the glycosylated HA during virus budding to facilitate virus release. Additionally helps virus spread through the circulation by further removing sialic acids from the cell surface. These cleavages prevent self-aggregation and ensure the efficient spread of the progeny virus from cell to cell. Otherwise, infection would be limited to one round of replication. Described as a receptor-destroying enzyme because it cleaves a terminal sialic acid from the cellular receptors. May facilitate viral invasion of the upper airways by cleaving the sialic acid moieties on the mucin of the airway epithelial cells. Likely to plays a role in the budding process through its association with lipid rafts during intracellular transport. May additionally display a raft-association independent effect on budding. Plays a role in the determination of host range restriction on replication and virulence. Sialidase activity in late endosome/lysosome traffic seems to enhance virus replication.</text>
</comment>
<comment type="catalytic activity">
    <reaction evidence="1">
        <text>Hydrolysis of alpha-(2-&gt;3)-, alpha-(2-&gt;6)-, alpha-(2-&gt;8)- glycosidic linkages of terminal sialic acid residues in oligosaccharides, glycoproteins, glycolipids, colominic acid and synthetic substrates.</text>
        <dbReference type="EC" id="3.2.1.18"/>
    </reaction>
</comment>
<comment type="cofactor">
    <cofactor evidence="1">
        <name>Ca(2+)</name>
        <dbReference type="ChEBI" id="CHEBI:29108"/>
    </cofactor>
</comment>
<comment type="activity regulation">
    <text evidence="1">Inhibited by the neuraminidase inhibitors zanamivir (Relenza) and oseltamivir (Tamiflu). These drugs interfere with the release of progeny virus from infected cells and are effective against all influenza strains. Resistance to neuraminidase inhibitors is quite rare.</text>
</comment>
<comment type="subunit">
    <text evidence="1">Homotetramer.</text>
</comment>
<comment type="subcellular location">
    <subcellularLocation>
        <location evidence="1">Virion membrane</location>
    </subcellularLocation>
    <subcellularLocation>
        <location evidence="1">Host apical cell membrane</location>
        <topology evidence="1">Single-pass type II membrane protein</topology>
    </subcellularLocation>
    <text evidence="1">Preferentially accumulates at the apical plasma membrane in infected polarized epithelial cells, which is the virus assembly site. Uses lipid rafts for cell surface transport and apical sorting. In the virion, forms a mushroom-shaped spike on the surface of the membrane.</text>
</comment>
<comment type="domain">
    <text evidence="1">Intact N-terminus is essential for virion morphogenesis. Possesses two apical sorting signals, one in the ectodomain, which is likely to be a glycan, and the other in the transmembrane domain. The transmembrane domain also plays a role in lipid raft association.</text>
</comment>
<comment type="PTM">
    <text evidence="1">N-glycosylated.</text>
</comment>
<comment type="miscellaneous">
    <text>The influenza A genome consist of 8 RNA segments. Genetic variation of hemagglutinin and/or neuraminidase genes results in the emergence of new influenza strains. The mechanism of variation can be the result of point mutations or the result of genetic reassortment between segments of two different strains.</text>
</comment>
<comment type="similarity">
    <text evidence="1">Belongs to the glycosyl hydrolase 34 family.</text>
</comment>
<sequence>MNPNQKIITIGSICMAIGIISLILQIGNIISIWVSHSIQTGSQNHTGICNQRIITYENSTWVNQTYVNISNTNVVAGKDTTSMTLAGNSSLCPIRGWAIYSKDNSIRIGSKGDVFVIREPFISCSHLECRTFFLTQGALLNDKHSNGTVKDRSPYRALMSCPIGEAPCPYNSRFESVAWSASACHDGMGWLTIGISGPDDGAVAVLKYNGIITETIKSWRKQILRTQESECVCVNGSCFTIMTDGPSDGPASYRIFKIEKGKITKSIELDAPNSHYEECSCYPDTGTVMCVCRDNWHGSNRPWVSFNQNLDYQIGYICSGVFGDNPRPKDGKGSCDPVNVDGADGIKGFSYRYGNGVWIGRTKSNSSRKGFEMIWDPNGWTDTDSNFLVKQDVVAMTDWSGYSGSFVQHPELTGLDCMRPCFWVELIRGRPREKTTIWTSGSSISFCGVNSDTVNWSWPDGAELPFTIDK</sequence>
<organismHost>
    <name type="scientific">Aves</name>
    <dbReference type="NCBI Taxonomy" id="8782"/>
</organismHost>
<organismHost>
    <name type="scientific">Homo sapiens</name>
    <name type="common">Human</name>
    <dbReference type="NCBI Taxonomy" id="9606"/>
</organismHost>
<organismHost>
    <name type="scientific">Sus scrofa</name>
    <name type="common">Pig</name>
    <dbReference type="NCBI Taxonomy" id="9823"/>
</organismHost>
<name>NRAM_I54A0</name>
<dbReference type="EC" id="3.2.1.18" evidence="1"/>
<dbReference type="EMBL" id="M38309">
    <property type="protein sequence ID" value="AAA43797.1"/>
    <property type="status" value="ALT_SEQ"/>
    <property type="molecule type" value="Genomic_RNA"/>
</dbReference>
<dbReference type="SMR" id="P31349"/>
<dbReference type="CAZy" id="GH34">
    <property type="family name" value="Glycoside Hydrolase Family 34"/>
</dbReference>
<dbReference type="GlyCosmos" id="P31349">
    <property type="glycosylation" value="9 sites, No reported glycans"/>
</dbReference>
<dbReference type="GO" id="GO:0020002">
    <property type="term" value="C:host cell plasma membrane"/>
    <property type="evidence" value="ECO:0007669"/>
    <property type="project" value="UniProtKB-SubCell"/>
</dbReference>
<dbReference type="GO" id="GO:0016020">
    <property type="term" value="C:membrane"/>
    <property type="evidence" value="ECO:0007669"/>
    <property type="project" value="UniProtKB-UniRule"/>
</dbReference>
<dbReference type="GO" id="GO:0055036">
    <property type="term" value="C:virion membrane"/>
    <property type="evidence" value="ECO:0007669"/>
    <property type="project" value="UniProtKB-SubCell"/>
</dbReference>
<dbReference type="GO" id="GO:0004308">
    <property type="term" value="F:exo-alpha-sialidase activity"/>
    <property type="evidence" value="ECO:0007669"/>
    <property type="project" value="UniProtKB-UniRule"/>
</dbReference>
<dbReference type="GO" id="GO:0046872">
    <property type="term" value="F:metal ion binding"/>
    <property type="evidence" value="ECO:0007669"/>
    <property type="project" value="UniProtKB-UniRule"/>
</dbReference>
<dbReference type="GO" id="GO:0005975">
    <property type="term" value="P:carbohydrate metabolic process"/>
    <property type="evidence" value="ECO:0007669"/>
    <property type="project" value="InterPro"/>
</dbReference>
<dbReference type="GO" id="GO:0046761">
    <property type="term" value="P:viral budding from plasma membrane"/>
    <property type="evidence" value="ECO:0007669"/>
    <property type="project" value="UniProtKB-UniRule"/>
</dbReference>
<dbReference type="CDD" id="cd15483">
    <property type="entry name" value="Influenza_NA"/>
    <property type="match status" value="1"/>
</dbReference>
<dbReference type="FunFam" id="2.120.10.10:FF:000001">
    <property type="entry name" value="Neuraminidase"/>
    <property type="match status" value="1"/>
</dbReference>
<dbReference type="Gene3D" id="2.120.10.10">
    <property type="match status" value="1"/>
</dbReference>
<dbReference type="HAMAP" id="MF_04071">
    <property type="entry name" value="INFV_NRAM"/>
    <property type="match status" value="1"/>
</dbReference>
<dbReference type="InterPro" id="IPR001860">
    <property type="entry name" value="Glyco_hydro_34"/>
</dbReference>
<dbReference type="InterPro" id="IPR033654">
    <property type="entry name" value="Sialidase_Influenza_A/B"/>
</dbReference>
<dbReference type="InterPro" id="IPR036278">
    <property type="entry name" value="Sialidase_sf"/>
</dbReference>
<dbReference type="Pfam" id="PF00064">
    <property type="entry name" value="Neur"/>
    <property type="match status" value="1"/>
</dbReference>
<dbReference type="SUPFAM" id="SSF50939">
    <property type="entry name" value="Sialidases"/>
    <property type="match status" value="1"/>
</dbReference>
<organism>
    <name type="scientific">Influenza A virus (strain A/Leningrad/1/1954 H1N1)</name>
    <dbReference type="NCBI Taxonomy" id="393557"/>
    <lineage>
        <taxon>Viruses</taxon>
        <taxon>Riboviria</taxon>
        <taxon>Orthornavirae</taxon>
        <taxon>Negarnaviricota</taxon>
        <taxon>Polyploviricotina</taxon>
        <taxon>Insthoviricetes</taxon>
        <taxon>Articulavirales</taxon>
        <taxon>Orthomyxoviridae</taxon>
        <taxon>Alphainfluenzavirus</taxon>
        <taxon>Alphainfluenzavirus influenzae</taxon>
        <taxon>Influenza A virus</taxon>
    </lineage>
</organism>